<sequence>MEIKMAKDYGFCFGVKRAIQIAEKNQNSLIFGSLIHNAKEINRLEKNFNVKIEEDPKKIPKNKSVIIRTHGIPKQDLEYLKNKGVKITDATCPYVIKPQQIVESMSKEGYQIVLFGDINHPEVKGVISYATNQALVVNSLEELQEKKLQRKVALVSQTTKQTPKLLQIASYLVERCTEVRIFNTICNATSYNQKAALDLSKEVDIMIVVGGKTSSNTKQLLSIAKQHCKDSYLVEDENELELAWFKDKKLCGITAGASTPDWIIENVKQKISTI</sequence>
<accession>P65186</accession>
<accession>O25160</accession>
<proteinExistence type="inferred from homology"/>
<protein>
    <recommendedName>
        <fullName evidence="1">4-hydroxy-3-methylbut-2-enyl diphosphate reductase</fullName>
        <shortName evidence="1">HMBPP reductase</shortName>
        <ecNumber evidence="1">1.17.7.4</ecNumber>
    </recommendedName>
</protein>
<reference key="1">
    <citation type="journal article" date="1999" name="Nature">
        <title>Genomic sequence comparison of two unrelated isolates of the human gastric pathogen Helicobacter pylori.</title>
        <authorList>
            <person name="Alm R.A."/>
            <person name="Ling L.-S.L."/>
            <person name="Moir D.T."/>
            <person name="King B.L."/>
            <person name="Brown E.D."/>
            <person name="Doig P.C."/>
            <person name="Smith D.R."/>
            <person name="Noonan B."/>
            <person name="Guild B.C."/>
            <person name="deJonge B.L."/>
            <person name="Carmel G."/>
            <person name="Tummino P.J."/>
            <person name="Caruso A."/>
            <person name="Uria-Nickelsen M."/>
            <person name="Mills D.M."/>
            <person name="Ives C."/>
            <person name="Gibson R."/>
            <person name="Merberg D."/>
            <person name="Mills S.D."/>
            <person name="Jiang Q."/>
            <person name="Taylor D.E."/>
            <person name="Vovis G.F."/>
            <person name="Trust T.J."/>
        </authorList>
    </citation>
    <scope>NUCLEOTIDE SEQUENCE [LARGE SCALE GENOMIC DNA]</scope>
    <source>
        <strain>J99 / ATCC 700824</strain>
    </source>
</reference>
<evidence type="ECO:0000255" key="1">
    <source>
        <dbReference type="HAMAP-Rule" id="MF_00191"/>
    </source>
</evidence>
<name>ISPH_HELPJ</name>
<organism>
    <name type="scientific">Helicobacter pylori (strain J99 / ATCC 700824)</name>
    <name type="common">Campylobacter pylori J99</name>
    <dbReference type="NCBI Taxonomy" id="85963"/>
    <lineage>
        <taxon>Bacteria</taxon>
        <taxon>Pseudomonadati</taxon>
        <taxon>Campylobacterota</taxon>
        <taxon>Epsilonproteobacteria</taxon>
        <taxon>Campylobacterales</taxon>
        <taxon>Helicobacteraceae</taxon>
        <taxon>Helicobacter</taxon>
    </lineage>
</organism>
<comment type="function">
    <text evidence="1">Catalyzes the conversion of 1-hydroxy-2-methyl-2-(E)-butenyl 4-diphosphate (HMBPP) into a mixture of isopentenyl diphosphate (IPP) and dimethylallyl diphosphate (DMAPP). Acts in the terminal step of the DOXP/MEP pathway for isoprenoid precursor biosynthesis.</text>
</comment>
<comment type="catalytic activity">
    <reaction evidence="1">
        <text>isopentenyl diphosphate + 2 oxidized [2Fe-2S]-[ferredoxin] + H2O = (2E)-4-hydroxy-3-methylbut-2-enyl diphosphate + 2 reduced [2Fe-2S]-[ferredoxin] + 2 H(+)</text>
        <dbReference type="Rhea" id="RHEA:24488"/>
        <dbReference type="Rhea" id="RHEA-COMP:10000"/>
        <dbReference type="Rhea" id="RHEA-COMP:10001"/>
        <dbReference type="ChEBI" id="CHEBI:15377"/>
        <dbReference type="ChEBI" id="CHEBI:15378"/>
        <dbReference type="ChEBI" id="CHEBI:33737"/>
        <dbReference type="ChEBI" id="CHEBI:33738"/>
        <dbReference type="ChEBI" id="CHEBI:128753"/>
        <dbReference type="ChEBI" id="CHEBI:128769"/>
        <dbReference type="EC" id="1.17.7.4"/>
    </reaction>
</comment>
<comment type="catalytic activity">
    <reaction evidence="1">
        <text>dimethylallyl diphosphate + 2 oxidized [2Fe-2S]-[ferredoxin] + H2O = (2E)-4-hydroxy-3-methylbut-2-enyl diphosphate + 2 reduced [2Fe-2S]-[ferredoxin] + 2 H(+)</text>
        <dbReference type="Rhea" id="RHEA:24825"/>
        <dbReference type="Rhea" id="RHEA-COMP:10000"/>
        <dbReference type="Rhea" id="RHEA-COMP:10001"/>
        <dbReference type="ChEBI" id="CHEBI:15377"/>
        <dbReference type="ChEBI" id="CHEBI:15378"/>
        <dbReference type="ChEBI" id="CHEBI:33737"/>
        <dbReference type="ChEBI" id="CHEBI:33738"/>
        <dbReference type="ChEBI" id="CHEBI:57623"/>
        <dbReference type="ChEBI" id="CHEBI:128753"/>
        <dbReference type="EC" id="1.17.7.4"/>
    </reaction>
</comment>
<comment type="cofactor">
    <cofactor evidence="1">
        <name>[4Fe-4S] cluster</name>
        <dbReference type="ChEBI" id="CHEBI:49883"/>
    </cofactor>
    <text evidence="1">Binds 1 [4Fe-4S] cluster per subunit.</text>
</comment>
<comment type="pathway">
    <text evidence="1">Isoprenoid biosynthesis; dimethylallyl diphosphate biosynthesis; dimethylallyl diphosphate from (2E)-4-hydroxy-3-methylbutenyl diphosphate: step 1/1.</text>
</comment>
<comment type="pathway">
    <text evidence="1">Isoprenoid biosynthesis; isopentenyl diphosphate biosynthesis via DXP pathway; isopentenyl diphosphate from 1-deoxy-D-xylulose 5-phosphate: step 6/6.</text>
</comment>
<comment type="similarity">
    <text evidence="1">Belongs to the IspH family.</text>
</comment>
<feature type="chain" id="PRO_0000128827" description="4-hydroxy-3-methylbut-2-enyl diphosphate reductase">
    <location>
        <begin position="1"/>
        <end position="274"/>
    </location>
</feature>
<feature type="active site" description="Proton donor" evidence="1">
    <location>
        <position position="122"/>
    </location>
</feature>
<feature type="binding site" evidence="1">
    <location>
        <position position="12"/>
    </location>
    <ligand>
        <name>[4Fe-4S] cluster</name>
        <dbReference type="ChEBI" id="CHEBI:49883"/>
    </ligand>
</feature>
<feature type="binding site" evidence="1">
    <location>
        <position position="36"/>
    </location>
    <ligand>
        <name>(2E)-4-hydroxy-3-methylbut-2-enyl diphosphate</name>
        <dbReference type="ChEBI" id="CHEBI:128753"/>
    </ligand>
</feature>
<feature type="binding site" evidence="1">
    <location>
        <position position="36"/>
    </location>
    <ligand>
        <name>dimethylallyl diphosphate</name>
        <dbReference type="ChEBI" id="CHEBI:57623"/>
    </ligand>
</feature>
<feature type="binding site" evidence="1">
    <location>
        <position position="36"/>
    </location>
    <ligand>
        <name>isopentenyl diphosphate</name>
        <dbReference type="ChEBI" id="CHEBI:128769"/>
    </ligand>
</feature>
<feature type="binding site" evidence="1">
    <location>
        <position position="70"/>
    </location>
    <ligand>
        <name>(2E)-4-hydroxy-3-methylbut-2-enyl diphosphate</name>
        <dbReference type="ChEBI" id="CHEBI:128753"/>
    </ligand>
</feature>
<feature type="binding site" evidence="1">
    <location>
        <position position="70"/>
    </location>
    <ligand>
        <name>dimethylallyl diphosphate</name>
        <dbReference type="ChEBI" id="CHEBI:57623"/>
    </ligand>
</feature>
<feature type="binding site" evidence="1">
    <location>
        <position position="70"/>
    </location>
    <ligand>
        <name>isopentenyl diphosphate</name>
        <dbReference type="ChEBI" id="CHEBI:128769"/>
    </ligand>
</feature>
<feature type="binding site" evidence="1">
    <location>
        <position position="92"/>
    </location>
    <ligand>
        <name>[4Fe-4S] cluster</name>
        <dbReference type="ChEBI" id="CHEBI:49883"/>
    </ligand>
</feature>
<feature type="binding site" evidence="1">
    <location>
        <position position="120"/>
    </location>
    <ligand>
        <name>(2E)-4-hydroxy-3-methylbut-2-enyl diphosphate</name>
        <dbReference type="ChEBI" id="CHEBI:128753"/>
    </ligand>
</feature>
<feature type="binding site" evidence="1">
    <location>
        <position position="120"/>
    </location>
    <ligand>
        <name>dimethylallyl diphosphate</name>
        <dbReference type="ChEBI" id="CHEBI:57623"/>
    </ligand>
</feature>
<feature type="binding site" evidence="1">
    <location>
        <position position="120"/>
    </location>
    <ligand>
        <name>isopentenyl diphosphate</name>
        <dbReference type="ChEBI" id="CHEBI:128769"/>
    </ligand>
</feature>
<feature type="binding site" evidence="1">
    <location>
        <position position="158"/>
    </location>
    <ligand>
        <name>(2E)-4-hydroxy-3-methylbut-2-enyl diphosphate</name>
        <dbReference type="ChEBI" id="CHEBI:128753"/>
    </ligand>
</feature>
<feature type="binding site" evidence="1">
    <location>
        <position position="186"/>
    </location>
    <ligand>
        <name>[4Fe-4S] cluster</name>
        <dbReference type="ChEBI" id="CHEBI:49883"/>
    </ligand>
</feature>
<feature type="binding site" evidence="1">
    <location>
        <position position="214"/>
    </location>
    <ligand>
        <name>(2E)-4-hydroxy-3-methylbut-2-enyl diphosphate</name>
        <dbReference type="ChEBI" id="CHEBI:128753"/>
    </ligand>
</feature>
<feature type="binding site" evidence="1">
    <location>
        <position position="214"/>
    </location>
    <ligand>
        <name>dimethylallyl diphosphate</name>
        <dbReference type="ChEBI" id="CHEBI:57623"/>
    </ligand>
</feature>
<feature type="binding site" evidence="1">
    <location>
        <position position="214"/>
    </location>
    <ligand>
        <name>isopentenyl diphosphate</name>
        <dbReference type="ChEBI" id="CHEBI:128769"/>
    </ligand>
</feature>
<feature type="binding site" evidence="1">
    <location>
        <position position="215"/>
    </location>
    <ligand>
        <name>(2E)-4-hydroxy-3-methylbut-2-enyl diphosphate</name>
        <dbReference type="ChEBI" id="CHEBI:128753"/>
    </ligand>
</feature>
<feature type="binding site" evidence="1">
    <location>
        <position position="215"/>
    </location>
    <ligand>
        <name>dimethylallyl diphosphate</name>
        <dbReference type="ChEBI" id="CHEBI:57623"/>
    </ligand>
</feature>
<feature type="binding site" evidence="1">
    <location>
        <position position="215"/>
    </location>
    <ligand>
        <name>isopentenyl diphosphate</name>
        <dbReference type="ChEBI" id="CHEBI:128769"/>
    </ligand>
</feature>
<feature type="binding site" evidence="1">
    <location>
        <position position="216"/>
    </location>
    <ligand>
        <name>(2E)-4-hydroxy-3-methylbut-2-enyl diphosphate</name>
        <dbReference type="ChEBI" id="CHEBI:128753"/>
    </ligand>
</feature>
<feature type="binding site" evidence="1">
    <location>
        <position position="216"/>
    </location>
    <ligand>
        <name>dimethylallyl diphosphate</name>
        <dbReference type="ChEBI" id="CHEBI:57623"/>
    </ligand>
</feature>
<feature type="binding site" evidence="1">
    <location>
        <position position="216"/>
    </location>
    <ligand>
        <name>isopentenyl diphosphate</name>
        <dbReference type="ChEBI" id="CHEBI:128769"/>
    </ligand>
</feature>
<feature type="binding site" evidence="1">
    <location>
        <position position="258"/>
    </location>
    <ligand>
        <name>(2E)-4-hydroxy-3-methylbut-2-enyl diphosphate</name>
        <dbReference type="ChEBI" id="CHEBI:128753"/>
    </ligand>
</feature>
<feature type="binding site" evidence="1">
    <location>
        <position position="258"/>
    </location>
    <ligand>
        <name>dimethylallyl diphosphate</name>
        <dbReference type="ChEBI" id="CHEBI:57623"/>
    </ligand>
</feature>
<feature type="binding site" evidence="1">
    <location>
        <position position="258"/>
    </location>
    <ligand>
        <name>isopentenyl diphosphate</name>
        <dbReference type="ChEBI" id="CHEBI:128769"/>
    </ligand>
</feature>
<gene>
    <name evidence="1" type="primary">ispH</name>
    <name type="synonym">lytB</name>
    <name type="ordered locus">jhp_0981</name>
</gene>
<dbReference type="EC" id="1.17.7.4" evidence="1"/>
<dbReference type="EMBL" id="AE001439">
    <property type="protein sequence ID" value="AAD06556.1"/>
    <property type="molecule type" value="Genomic_DNA"/>
</dbReference>
<dbReference type="RefSeq" id="WP_000403575.1">
    <property type="nucleotide sequence ID" value="NZ_CP011330.1"/>
</dbReference>
<dbReference type="SMR" id="P65186"/>
<dbReference type="KEGG" id="hpj:jhp_0981"/>
<dbReference type="PATRIC" id="fig|85963.30.peg.1610"/>
<dbReference type="eggNOG" id="COG0761">
    <property type="taxonomic scope" value="Bacteria"/>
</dbReference>
<dbReference type="UniPathway" id="UPA00056">
    <property type="reaction ID" value="UER00097"/>
</dbReference>
<dbReference type="UniPathway" id="UPA00059">
    <property type="reaction ID" value="UER00105"/>
</dbReference>
<dbReference type="Proteomes" id="UP000000804">
    <property type="component" value="Chromosome"/>
</dbReference>
<dbReference type="GO" id="GO:0051539">
    <property type="term" value="F:4 iron, 4 sulfur cluster binding"/>
    <property type="evidence" value="ECO:0007669"/>
    <property type="project" value="UniProtKB-UniRule"/>
</dbReference>
<dbReference type="GO" id="GO:0051745">
    <property type="term" value="F:4-hydroxy-3-methylbut-2-enyl diphosphate reductase activity"/>
    <property type="evidence" value="ECO:0007669"/>
    <property type="project" value="UniProtKB-UniRule"/>
</dbReference>
<dbReference type="GO" id="GO:0046872">
    <property type="term" value="F:metal ion binding"/>
    <property type="evidence" value="ECO:0007669"/>
    <property type="project" value="UniProtKB-KW"/>
</dbReference>
<dbReference type="GO" id="GO:0050992">
    <property type="term" value="P:dimethylallyl diphosphate biosynthetic process"/>
    <property type="evidence" value="ECO:0007669"/>
    <property type="project" value="UniProtKB-UniRule"/>
</dbReference>
<dbReference type="GO" id="GO:0019288">
    <property type="term" value="P:isopentenyl diphosphate biosynthetic process, methylerythritol 4-phosphate pathway"/>
    <property type="evidence" value="ECO:0007669"/>
    <property type="project" value="UniProtKB-UniRule"/>
</dbReference>
<dbReference type="GO" id="GO:0016114">
    <property type="term" value="P:terpenoid biosynthetic process"/>
    <property type="evidence" value="ECO:0007669"/>
    <property type="project" value="UniProtKB-UniRule"/>
</dbReference>
<dbReference type="CDD" id="cd13944">
    <property type="entry name" value="lytB_ispH"/>
    <property type="match status" value="1"/>
</dbReference>
<dbReference type="Gene3D" id="3.40.50.11270">
    <property type="match status" value="1"/>
</dbReference>
<dbReference type="Gene3D" id="3.40.1010.20">
    <property type="entry name" value="4-hydroxy-3-methylbut-2-enyl diphosphate reductase, catalytic domain"/>
    <property type="match status" value="2"/>
</dbReference>
<dbReference type="HAMAP" id="MF_00191">
    <property type="entry name" value="IspH"/>
    <property type="match status" value="1"/>
</dbReference>
<dbReference type="InterPro" id="IPR003451">
    <property type="entry name" value="LytB/IspH"/>
</dbReference>
<dbReference type="NCBIfam" id="TIGR00216">
    <property type="entry name" value="ispH_lytB"/>
    <property type="match status" value="1"/>
</dbReference>
<dbReference type="NCBIfam" id="NF002187">
    <property type="entry name" value="PRK01045.1-1"/>
    <property type="match status" value="1"/>
</dbReference>
<dbReference type="PANTHER" id="PTHR30426">
    <property type="entry name" value="4-HYDROXY-3-METHYLBUT-2-ENYL DIPHOSPHATE REDUCTASE"/>
    <property type="match status" value="1"/>
</dbReference>
<dbReference type="PANTHER" id="PTHR30426:SF0">
    <property type="entry name" value="4-HYDROXY-3-METHYLBUT-2-ENYL DIPHOSPHATE REDUCTASE"/>
    <property type="match status" value="1"/>
</dbReference>
<dbReference type="Pfam" id="PF02401">
    <property type="entry name" value="LYTB"/>
    <property type="match status" value="1"/>
</dbReference>
<keyword id="KW-0004">4Fe-4S</keyword>
<keyword id="KW-0408">Iron</keyword>
<keyword id="KW-0411">Iron-sulfur</keyword>
<keyword id="KW-0414">Isoprene biosynthesis</keyword>
<keyword id="KW-0479">Metal-binding</keyword>
<keyword id="KW-0560">Oxidoreductase</keyword>